<sequence>MPLEMFMFATTRMALLIGGAIGGATFPLFAQETTKNDTVIVTSPVQSGATKLATPDIETPQSVSIITRQQFEEQGATSVRQAVSYTPGVYSNQIGASNRFDYIVLRGFSDGSLDNVYLDGLKMMGDTNSHSSLVVDPWFLEDIEVVRGPASVLYGRSSPGGIVALTSRKPAFDAGGEVKLFAGNNNQRGAAFDVTGPLDDNERVAARLSGMTRYADSQFTPLKEERYALMPSLTWRITDRTRLDLMAYLHRDPEGGSHSGLPYQGTVVPYNGGKISNTFFEGEDDYDKYDRRENMVGYNIEHLFDNGWSVRQKLRYLHTKVTLNQVYAAGWLNETALNRGYSGSGEKMSAIALDNQLDGSVDTGAINHRLLVGIDYQDRSNHTTGYYGAFPPIDAFNPVYGAQPDYITLYSREKHKLRQTGYYLQDQMSWDRWRFTLGGRYDRVSVSNIDKLHDSRSDLDKNNVSTRAALLYLFDNGVAPYLSYSTAFTPTSFADENGNVLEPMKGKQWEAGVKYEPPGGNSQFSAAVYRINQTNIATKEEPTDPYRSIGEIESKGVELEAISHLSDSVRLQAAYTYTDIRYKKSSPQEQGKRAVYAPRNQASAWLSYDVKSGLLEGLTLGSGIRYVNGVTSDRLNTHTLPSYTLVDMVVGYDLSSIGLNGLSAQLNVNNLTDKRYVAACNSLSYCYFGAERSIVGSVSWAF</sequence>
<gene>
    <name type="primary">foxA</name>
    <name type="ordered locus">SL1344_0359</name>
</gene>
<accession>E1W8M5</accession>
<accession>Q56145</accession>
<feature type="signal peptide" evidence="2">
    <location>
        <begin position="1"/>
        <end position="30"/>
    </location>
</feature>
<feature type="chain" id="PRO_0000406084" description="Ferrioxamine B receptor">
    <location>
        <begin position="31"/>
        <end position="702"/>
    </location>
</feature>
<feature type="domain" description="TBDR plug" evidence="3">
    <location>
        <begin position="55"/>
        <end position="168"/>
    </location>
</feature>
<feature type="domain" description="TBDR beta-barrel" evidence="3">
    <location>
        <begin position="173"/>
        <end position="702"/>
    </location>
</feature>
<feature type="sequence conflict" description="In Ref. 2; AAC15464." evidence="5" ref="2">
    <original>MA</original>
    <variation>SP</variation>
    <location>
        <begin position="246"/>
        <end position="247"/>
    </location>
</feature>
<feature type="sequence conflict" description="In Ref. 2; AAC15464." evidence="5" ref="2">
    <original>G</original>
    <variation>R</variation>
    <location>
        <position position="255"/>
    </location>
</feature>
<feature type="sequence conflict" description="In Ref. 2; AAC15464." evidence="5" ref="2">
    <original>F</original>
    <variation>S</variation>
    <location>
        <position position="279"/>
    </location>
</feature>
<feature type="sequence conflict" description="In Ref. 2; AAC15464." evidence="5" ref="2">
    <original>A</original>
    <variation>P</variation>
    <location>
        <position position="352"/>
    </location>
</feature>
<feature type="sequence conflict" description="In Ref. 2; AAC15464." evidence="5" ref="2">
    <original>HRLLVGI</original>
    <variation>SSSAGGD</variation>
    <location>
        <begin position="368"/>
        <end position="374"/>
    </location>
</feature>
<organism>
    <name type="scientific">Salmonella typhimurium (strain SL1344)</name>
    <dbReference type="NCBI Taxonomy" id="216597"/>
    <lineage>
        <taxon>Bacteria</taxon>
        <taxon>Pseudomonadati</taxon>
        <taxon>Pseudomonadota</taxon>
        <taxon>Gammaproteobacteria</taxon>
        <taxon>Enterobacterales</taxon>
        <taxon>Enterobacteriaceae</taxon>
        <taxon>Salmonella</taxon>
    </lineage>
</organism>
<evidence type="ECO:0000250" key="1"/>
<evidence type="ECO:0000255" key="2"/>
<evidence type="ECO:0000255" key="3">
    <source>
        <dbReference type="PROSITE-ProRule" id="PRU01360"/>
    </source>
</evidence>
<evidence type="ECO:0000269" key="4">
    <source>
    </source>
</evidence>
<evidence type="ECO:0000305" key="5"/>
<proteinExistence type="inferred from homology"/>
<keyword id="KW-0998">Cell outer membrane</keyword>
<keyword id="KW-0406">Ion transport</keyword>
<keyword id="KW-0408">Iron</keyword>
<keyword id="KW-0410">Iron transport</keyword>
<keyword id="KW-0472">Membrane</keyword>
<keyword id="KW-0675">Receptor</keyword>
<keyword id="KW-0732">Signal</keyword>
<keyword id="KW-0798">TonB box</keyword>
<keyword id="KW-0812">Transmembrane</keyword>
<keyword id="KW-1134">Transmembrane beta strand</keyword>
<keyword id="KW-0813">Transport</keyword>
<dbReference type="EMBL" id="FQ312003">
    <property type="protein sequence ID" value="CBW16459.1"/>
    <property type="molecule type" value="Genomic_DNA"/>
</dbReference>
<dbReference type="EMBL" id="AF060876">
    <property type="protein sequence ID" value="AAC15464.1"/>
    <property type="molecule type" value="Genomic_DNA"/>
</dbReference>
<dbReference type="SMR" id="E1W8M5"/>
<dbReference type="KEGG" id="sey:SL1344_0359"/>
<dbReference type="PATRIC" id="fig|216597.6.peg.400"/>
<dbReference type="HOGENOM" id="CLU_008287_9_0_6"/>
<dbReference type="BioCyc" id="SENT216597:SL1344_RS01865-MONOMER"/>
<dbReference type="Proteomes" id="UP000008962">
    <property type="component" value="Chromosome"/>
</dbReference>
<dbReference type="GO" id="GO:0009279">
    <property type="term" value="C:cell outer membrane"/>
    <property type="evidence" value="ECO:0007669"/>
    <property type="project" value="UniProtKB-SubCell"/>
</dbReference>
<dbReference type="GO" id="GO:0015344">
    <property type="term" value="F:siderophore uptake transmembrane transporter activity"/>
    <property type="evidence" value="ECO:0007669"/>
    <property type="project" value="TreeGrafter"/>
</dbReference>
<dbReference type="GO" id="GO:0038023">
    <property type="term" value="F:signaling receptor activity"/>
    <property type="evidence" value="ECO:0007669"/>
    <property type="project" value="InterPro"/>
</dbReference>
<dbReference type="CDD" id="cd01347">
    <property type="entry name" value="ligand_gated_channel"/>
    <property type="match status" value="1"/>
</dbReference>
<dbReference type="FunFam" id="2.170.130.10:FF:000001">
    <property type="entry name" value="Catecholate siderophore TonB-dependent receptor"/>
    <property type="match status" value="1"/>
</dbReference>
<dbReference type="FunFam" id="2.40.170.20:FF:000011">
    <property type="entry name" value="Ferrioxamine B receptor"/>
    <property type="match status" value="1"/>
</dbReference>
<dbReference type="Gene3D" id="2.40.170.20">
    <property type="entry name" value="TonB-dependent receptor, beta-barrel domain"/>
    <property type="match status" value="1"/>
</dbReference>
<dbReference type="Gene3D" id="2.170.130.10">
    <property type="entry name" value="TonB-dependent receptor, plug domain"/>
    <property type="match status" value="1"/>
</dbReference>
<dbReference type="InterPro" id="IPR012910">
    <property type="entry name" value="Plug_dom"/>
</dbReference>
<dbReference type="InterPro" id="IPR037066">
    <property type="entry name" value="Plug_dom_sf"/>
</dbReference>
<dbReference type="InterPro" id="IPR039426">
    <property type="entry name" value="TonB-dep_rcpt-like"/>
</dbReference>
<dbReference type="InterPro" id="IPR000531">
    <property type="entry name" value="TonB-dep_rcpt_b-brl"/>
</dbReference>
<dbReference type="InterPro" id="IPR036942">
    <property type="entry name" value="TonB_rcpt_b-brl_sf"/>
</dbReference>
<dbReference type="InterPro" id="IPR010105">
    <property type="entry name" value="TonB_sidphr_rcpt"/>
</dbReference>
<dbReference type="NCBIfam" id="TIGR01783">
    <property type="entry name" value="TonB-siderophor"/>
    <property type="match status" value="1"/>
</dbReference>
<dbReference type="PANTHER" id="PTHR32552">
    <property type="entry name" value="FERRICHROME IRON RECEPTOR-RELATED"/>
    <property type="match status" value="1"/>
</dbReference>
<dbReference type="PANTHER" id="PTHR32552:SF68">
    <property type="entry name" value="FERRICHROME OUTER MEMBRANE TRANSPORTER_PHAGE RECEPTOR"/>
    <property type="match status" value="1"/>
</dbReference>
<dbReference type="Pfam" id="PF07715">
    <property type="entry name" value="Plug"/>
    <property type="match status" value="1"/>
</dbReference>
<dbReference type="Pfam" id="PF00593">
    <property type="entry name" value="TonB_dep_Rec_b-barrel"/>
    <property type="match status" value="1"/>
</dbReference>
<dbReference type="SUPFAM" id="SSF56935">
    <property type="entry name" value="Porins"/>
    <property type="match status" value="1"/>
</dbReference>
<dbReference type="PROSITE" id="PS52016">
    <property type="entry name" value="TONB_DEPENDENT_REC_3"/>
    <property type="match status" value="1"/>
</dbReference>
<comment type="function">
    <text evidence="1 4">Ferrioxamine binding and uptake, in association with the TonB protein (By similarity). May play a role in intestinal colonization.</text>
</comment>
<comment type="subcellular location">
    <subcellularLocation>
        <location evidence="3">Cell outer membrane</location>
        <topology evidence="3">Multi-pass membrane protein</topology>
    </subcellularLocation>
</comment>
<comment type="similarity">
    <text evidence="5">Belongs to the TonB-dependent receptor family.</text>
</comment>
<protein>
    <recommendedName>
        <fullName>Ferrioxamine B receptor</fullName>
    </recommendedName>
</protein>
<reference key="1">
    <citation type="journal article" date="2012" name="Proc. Natl. Acad. Sci. U.S.A.">
        <title>The transcriptional landscape and small RNAs of Salmonella enterica serovar Typhimurium.</title>
        <authorList>
            <person name="Kroger C."/>
            <person name="Dillon S.C."/>
            <person name="Cameron A.D."/>
            <person name="Papenfort K."/>
            <person name="Sivasankaran S.K."/>
            <person name="Hokamp K."/>
            <person name="Chao Y."/>
            <person name="Sittka A."/>
            <person name="Hebrard M."/>
            <person name="Handler K."/>
            <person name="Colgan A."/>
            <person name="Leekitcharoenphon P."/>
            <person name="Langridge G.C."/>
            <person name="Lohan A.J."/>
            <person name="Loftus B."/>
            <person name="Lucchini S."/>
            <person name="Ussery D.W."/>
            <person name="Dorman C.J."/>
            <person name="Thomson N.R."/>
            <person name="Vogel J."/>
            <person name="Hinton J.C."/>
        </authorList>
    </citation>
    <scope>NUCLEOTIDE SEQUENCE [LARGE SCALE GENOMIC DNA]</scope>
    <source>
        <strain>SL1344</strain>
    </source>
</reference>
<reference key="2">
    <citation type="journal article" date="1999" name="Appl. Environ. Microbiol.">
        <title>Ferrioxamine-mediated iron(III) utilization by Salmonella enterica.</title>
        <authorList>
            <person name="Kingsley R.A."/>
            <person name="Reissbrodt R."/>
            <person name="Rabsch W."/>
            <person name="Ketley J.M."/>
            <person name="Tsolis R.M."/>
            <person name="Everest P."/>
            <person name="Dougan G."/>
            <person name="Baeumler A.J."/>
            <person name="Roberts M."/>
            <person name="Williams P.H."/>
        </authorList>
    </citation>
    <scope>NUCLEOTIDE SEQUENCE [GENOMIC DNA] OF 1-374</scope>
    <scope>FUNCTION</scope>
    <source>
        <strain>SL1344</strain>
    </source>
</reference>
<name>FOXA_SALTS</name>